<keyword id="KW-1003">Cell membrane</keyword>
<keyword id="KW-0297">G-protein coupled receptor</keyword>
<keyword id="KW-0325">Glycoprotein</keyword>
<keyword id="KW-0472">Membrane</keyword>
<keyword id="KW-0552">Olfaction</keyword>
<keyword id="KW-0675">Receptor</keyword>
<keyword id="KW-1185">Reference proteome</keyword>
<keyword id="KW-0716">Sensory transduction</keyword>
<keyword id="KW-0807">Transducer</keyword>
<keyword id="KW-0812">Transmembrane</keyword>
<keyword id="KW-1133">Transmembrane helix</keyword>
<feature type="chain" id="PRO_0000150591" description="Olfactory receptor 5D13">
    <location>
        <begin position="1"/>
        <end position="314"/>
    </location>
</feature>
<feature type="topological domain" description="Extracellular" evidence="1">
    <location>
        <begin position="1"/>
        <end position="27"/>
    </location>
</feature>
<feature type="transmembrane region" description="Helical; Name=1" evidence="1">
    <location>
        <begin position="28"/>
        <end position="48"/>
    </location>
</feature>
<feature type="topological domain" description="Cytoplasmic" evidence="1">
    <location>
        <begin position="49"/>
        <end position="56"/>
    </location>
</feature>
<feature type="transmembrane region" description="Helical; Name=2" evidence="1">
    <location>
        <begin position="57"/>
        <end position="77"/>
    </location>
</feature>
<feature type="topological domain" description="Extracellular" evidence="1">
    <location>
        <begin position="78"/>
        <end position="101"/>
    </location>
</feature>
<feature type="transmembrane region" description="Helical; Name=3" evidence="1">
    <location>
        <begin position="102"/>
        <end position="122"/>
    </location>
</feature>
<feature type="topological domain" description="Cytoplasmic" evidence="1">
    <location>
        <begin position="123"/>
        <end position="141"/>
    </location>
</feature>
<feature type="transmembrane region" description="Helical; Name=4" evidence="1">
    <location>
        <begin position="142"/>
        <end position="162"/>
    </location>
</feature>
<feature type="topological domain" description="Extracellular" evidence="1">
    <location>
        <begin position="163"/>
        <end position="198"/>
    </location>
</feature>
<feature type="transmembrane region" description="Helical; Name=5" evidence="1">
    <location>
        <begin position="199"/>
        <end position="219"/>
    </location>
</feature>
<feature type="topological domain" description="Cytoplasmic" evidence="1">
    <location>
        <begin position="220"/>
        <end position="239"/>
    </location>
</feature>
<feature type="transmembrane region" description="Helical; Name=6" evidence="1">
    <location>
        <begin position="240"/>
        <end position="260"/>
    </location>
</feature>
<feature type="topological domain" description="Extracellular" evidence="1">
    <location>
        <begin position="261"/>
        <end position="273"/>
    </location>
</feature>
<feature type="transmembrane region" description="Helical; Name=7" evidence="1">
    <location>
        <begin position="274"/>
        <end position="294"/>
    </location>
</feature>
<feature type="topological domain" description="Cytoplasmic" evidence="1">
    <location>
        <begin position="295"/>
        <end position="314"/>
    </location>
</feature>
<feature type="glycosylation site" description="N-linked (GlcNAc...) asparagine" evidence="1">
    <location>
        <position position="7"/>
    </location>
</feature>
<feature type="sequence variant" id="VAR_024099" description="In dbSNP:rs297118.">
    <original>C</original>
    <variation>Y</variation>
    <location>
        <position position="62"/>
    </location>
</feature>
<feature type="sequence variant" id="VAR_024100" description="In dbSNP:rs11230983.">
    <original>R</original>
    <variation>H</variation>
    <location>
        <position position="124"/>
    </location>
</feature>
<feature type="sequence variant" id="VAR_034220" description="In dbSNP:rs7124871.">
    <original>R</original>
    <variation>L</variation>
    <location>
        <position position="236"/>
    </location>
</feature>
<proteinExistence type="inferred from homology"/>
<evidence type="ECO:0000255" key="1"/>
<evidence type="ECO:0000255" key="2">
    <source>
        <dbReference type="PROSITE-ProRule" id="PRU00521"/>
    </source>
</evidence>
<evidence type="ECO:0000305" key="3"/>
<gene>
    <name type="primary">OR5D13</name>
</gene>
<dbReference type="EMBL" id="AB065778">
    <property type="protein sequence ID" value="BAC05998.1"/>
    <property type="status" value="ALT_INIT"/>
    <property type="molecule type" value="Genomic_DNA"/>
</dbReference>
<dbReference type="EMBL" id="BK004333">
    <property type="protein sequence ID" value="DAA04731.1"/>
    <property type="molecule type" value="Genomic_DNA"/>
</dbReference>
<dbReference type="EMBL" id="BK004394">
    <property type="protein sequence ID" value="DAA04792.1"/>
    <property type="molecule type" value="Genomic_DNA"/>
</dbReference>
<dbReference type="RefSeq" id="NP_001001967.1">
    <property type="nucleotide sequence ID" value="NM_001001967.1"/>
</dbReference>
<dbReference type="SMR" id="Q8NGL4"/>
<dbReference type="FunCoup" id="Q8NGL4">
    <property type="interactions" value="416"/>
</dbReference>
<dbReference type="STRING" id="9606.ENSP00000485428"/>
<dbReference type="GlyCosmos" id="Q8NGL4">
    <property type="glycosylation" value="1 site, No reported glycans"/>
</dbReference>
<dbReference type="GlyGen" id="Q8NGL4">
    <property type="glycosylation" value="1 site"/>
</dbReference>
<dbReference type="iPTMnet" id="Q8NGL4"/>
<dbReference type="PhosphoSitePlus" id="Q8NGL4"/>
<dbReference type="BioMuta" id="OR5D13"/>
<dbReference type="DMDM" id="38372723"/>
<dbReference type="MassIVE" id="Q8NGL4"/>
<dbReference type="PaxDb" id="9606-ENSP00000354800"/>
<dbReference type="Antibodypedia" id="78666">
    <property type="antibodies" value="104 antibodies from 21 providers"/>
</dbReference>
<dbReference type="DNASU" id="390142"/>
<dbReference type="Ensembl" id="ENST00000623930.1">
    <property type="protein sequence ID" value="ENSP00000485428.1"/>
    <property type="gene ID" value="ENSG00000279761.2"/>
</dbReference>
<dbReference type="GeneID" id="390142"/>
<dbReference type="KEGG" id="hsa:390142"/>
<dbReference type="MANE-Select" id="ENST00000623930.1">
    <property type="protein sequence ID" value="ENSP00000485428.1"/>
    <property type="RefSeq nucleotide sequence ID" value="NM_001001967.1"/>
    <property type="RefSeq protein sequence ID" value="NP_001001967.1"/>
</dbReference>
<dbReference type="UCSC" id="uc010ril.2">
    <property type="organism name" value="human"/>
</dbReference>
<dbReference type="AGR" id="HGNC:15280"/>
<dbReference type="CTD" id="390142"/>
<dbReference type="DisGeNET" id="390142"/>
<dbReference type="GeneCards" id="OR5D13"/>
<dbReference type="HGNC" id="HGNC:15280">
    <property type="gene designation" value="OR5D13"/>
</dbReference>
<dbReference type="HPA" id="ENSG00000279761">
    <property type="expression patterns" value="Not detected"/>
</dbReference>
<dbReference type="neXtProt" id="NX_Q8NGL4"/>
<dbReference type="PharmGKB" id="PA32572"/>
<dbReference type="VEuPathDB" id="HostDB:ENSG00000279761"/>
<dbReference type="eggNOG" id="ENOG502TF14">
    <property type="taxonomic scope" value="Eukaryota"/>
</dbReference>
<dbReference type="GeneTree" id="ENSGT01130000278300"/>
<dbReference type="HOGENOM" id="CLU_012526_5_5_1"/>
<dbReference type="InParanoid" id="Q8NGL4"/>
<dbReference type="OMA" id="CIMQFCF"/>
<dbReference type="OrthoDB" id="9444602at2759"/>
<dbReference type="PAN-GO" id="Q8NGL4">
    <property type="GO annotations" value="4 GO annotations based on evolutionary models"/>
</dbReference>
<dbReference type="PhylomeDB" id="Q8NGL4"/>
<dbReference type="TreeFam" id="TF352746"/>
<dbReference type="PathwayCommons" id="Q8NGL4"/>
<dbReference type="Reactome" id="R-HSA-9752946">
    <property type="pathway name" value="Expression and translocation of olfactory receptors"/>
</dbReference>
<dbReference type="BioGRID-ORCS" id="390142">
    <property type="hits" value="9 hits in 694 CRISPR screens"/>
</dbReference>
<dbReference type="GeneWiki" id="OR5D13"/>
<dbReference type="GenomeRNAi" id="390142"/>
<dbReference type="Pharos" id="Q8NGL4">
    <property type="development level" value="Tdark"/>
</dbReference>
<dbReference type="PRO" id="PR:Q8NGL4"/>
<dbReference type="Proteomes" id="UP000005640">
    <property type="component" value="Chromosome 11"/>
</dbReference>
<dbReference type="RNAct" id="Q8NGL4">
    <property type="molecule type" value="protein"/>
</dbReference>
<dbReference type="GO" id="GO:0005886">
    <property type="term" value="C:plasma membrane"/>
    <property type="evidence" value="ECO:0007669"/>
    <property type="project" value="UniProtKB-SubCell"/>
</dbReference>
<dbReference type="GO" id="GO:0004930">
    <property type="term" value="F:G protein-coupled receptor activity"/>
    <property type="evidence" value="ECO:0007669"/>
    <property type="project" value="UniProtKB-KW"/>
</dbReference>
<dbReference type="GO" id="GO:0005549">
    <property type="term" value="F:odorant binding"/>
    <property type="evidence" value="ECO:0000318"/>
    <property type="project" value="GO_Central"/>
</dbReference>
<dbReference type="GO" id="GO:0004984">
    <property type="term" value="F:olfactory receptor activity"/>
    <property type="evidence" value="ECO:0000318"/>
    <property type="project" value="GO_Central"/>
</dbReference>
<dbReference type="GO" id="GO:0007186">
    <property type="term" value="P:G protein-coupled receptor signaling pathway"/>
    <property type="evidence" value="ECO:0000318"/>
    <property type="project" value="GO_Central"/>
</dbReference>
<dbReference type="GO" id="GO:0007608">
    <property type="term" value="P:sensory perception of smell"/>
    <property type="evidence" value="ECO:0000318"/>
    <property type="project" value="GO_Central"/>
</dbReference>
<dbReference type="CDD" id="cd15410">
    <property type="entry name" value="7tmA_OR5D-like"/>
    <property type="match status" value="1"/>
</dbReference>
<dbReference type="FunFam" id="1.20.1070.10:FF:000003">
    <property type="entry name" value="Olfactory receptor"/>
    <property type="match status" value="1"/>
</dbReference>
<dbReference type="Gene3D" id="1.20.1070.10">
    <property type="entry name" value="Rhodopsin 7-helix transmembrane proteins"/>
    <property type="match status" value="1"/>
</dbReference>
<dbReference type="InterPro" id="IPR000276">
    <property type="entry name" value="GPCR_Rhodpsn"/>
</dbReference>
<dbReference type="InterPro" id="IPR017452">
    <property type="entry name" value="GPCR_Rhodpsn_7TM"/>
</dbReference>
<dbReference type="InterPro" id="IPR000725">
    <property type="entry name" value="Olfact_rcpt"/>
</dbReference>
<dbReference type="PANTHER" id="PTHR48018">
    <property type="entry name" value="OLFACTORY RECEPTOR"/>
    <property type="match status" value="1"/>
</dbReference>
<dbReference type="Pfam" id="PF13853">
    <property type="entry name" value="7tm_4"/>
    <property type="match status" value="1"/>
</dbReference>
<dbReference type="PRINTS" id="PR00237">
    <property type="entry name" value="GPCRRHODOPSN"/>
</dbReference>
<dbReference type="PRINTS" id="PR00245">
    <property type="entry name" value="OLFACTORYR"/>
</dbReference>
<dbReference type="SUPFAM" id="SSF81321">
    <property type="entry name" value="Family A G protein-coupled receptor-like"/>
    <property type="match status" value="1"/>
</dbReference>
<dbReference type="PROSITE" id="PS00237">
    <property type="entry name" value="G_PROTEIN_RECEP_F1_1"/>
    <property type="match status" value="1"/>
</dbReference>
<dbReference type="PROSITE" id="PS50262">
    <property type="entry name" value="G_PROTEIN_RECEP_F1_2"/>
    <property type="match status" value="1"/>
</dbReference>
<protein>
    <recommendedName>
        <fullName>Olfactory receptor 5D13</fullName>
    </recommendedName>
    <alternativeName>
        <fullName>Olfactory receptor OR11-142</fullName>
    </alternativeName>
    <alternativeName>
        <fullName>Olfactory receptor OR11-148</fullName>
    </alternativeName>
</protein>
<sequence length="314" mass="35447">MMASERNQSSTPTFILLGFSEYPEIQVPLFLVFLFVYTVTVVGNLGMIIIIRLNSKLHTIMCFFLSHLSLTDFCFSTVVTPKLLENLVVEYRTISFSGCIMQFCFACIFGVTETFMLAAMAYDRFVAVCKPLLYTTIMSQKLCALLVAGSYTWGIVCSLILTYFLLDLSFCESTFINNFICDHSVIVSASYSDPYISQRLCFIIAIFNEVSSLIIILTSYMLIFTTIMKMRSASGRQKTFSTCASHLTAITIFHGTILFLYCVPNPKTSSLIVTVASVFYTVAIPMLNPLIYSLRNKDINNMFEKLVVTKLIYH</sequence>
<reference key="1">
    <citation type="submission" date="2001-07" db="EMBL/GenBank/DDBJ databases">
        <title>Genome-wide discovery and analysis of human seven transmembrane helix receptor genes.</title>
        <authorList>
            <person name="Suwa M."/>
            <person name="Sato T."/>
            <person name="Okouchi I."/>
            <person name="Arita M."/>
            <person name="Futami K."/>
            <person name="Matsumoto S."/>
            <person name="Tsutsumi S."/>
            <person name="Aburatani H."/>
            <person name="Asai K."/>
            <person name="Akiyama Y."/>
        </authorList>
    </citation>
    <scope>NUCLEOTIDE SEQUENCE [GENOMIC DNA]</scope>
</reference>
<reference key="2">
    <citation type="journal article" date="2004" name="Proc. Natl. Acad. Sci. U.S.A.">
        <title>The human olfactory receptor gene family.</title>
        <authorList>
            <person name="Malnic B."/>
            <person name="Godfrey P.A."/>
            <person name="Buck L.B."/>
        </authorList>
    </citation>
    <scope>IDENTIFICATION</scope>
</reference>
<reference key="3">
    <citation type="journal article" date="2004" name="Proc. Natl. Acad. Sci. U.S.A.">
        <authorList>
            <person name="Malnic B."/>
            <person name="Godfrey P.A."/>
            <person name="Buck L.B."/>
        </authorList>
    </citation>
    <scope>ERRATUM OF PUBMED:14983052</scope>
</reference>
<comment type="function">
    <text evidence="3">Odorant receptor.</text>
</comment>
<comment type="subcellular location">
    <subcellularLocation>
        <location>Cell membrane</location>
        <topology>Multi-pass membrane protein</topology>
    </subcellularLocation>
</comment>
<comment type="similarity">
    <text evidence="2">Belongs to the G-protein coupled receptor 1 family.</text>
</comment>
<comment type="sequence caution" evidence="3">
    <conflict type="erroneous initiation">
        <sequence resource="EMBL-CDS" id="BAC05998"/>
    </conflict>
</comment>
<comment type="online information" name="Human Olfactory Receptor Data Exploratorium (HORDE)">
    <link uri="http://genome.weizmann.ac.il/horde/card/index/symbol:OR5D13"/>
</comment>
<accession>Q8NGL4</accession>
<accession>Q6IF68</accession>
<accession>Q6IFC9</accession>
<organism>
    <name type="scientific">Homo sapiens</name>
    <name type="common">Human</name>
    <dbReference type="NCBI Taxonomy" id="9606"/>
    <lineage>
        <taxon>Eukaryota</taxon>
        <taxon>Metazoa</taxon>
        <taxon>Chordata</taxon>
        <taxon>Craniata</taxon>
        <taxon>Vertebrata</taxon>
        <taxon>Euteleostomi</taxon>
        <taxon>Mammalia</taxon>
        <taxon>Eutheria</taxon>
        <taxon>Euarchontoglires</taxon>
        <taxon>Primates</taxon>
        <taxon>Haplorrhini</taxon>
        <taxon>Catarrhini</taxon>
        <taxon>Hominidae</taxon>
        <taxon>Homo</taxon>
    </lineage>
</organism>
<name>OR5DD_HUMAN</name>